<organismHost>
    <name type="scientific">Canis lupus familiaris</name>
    <name type="common">Dog</name>
    <name type="synonym">Canis familiaris</name>
    <dbReference type="NCBI Taxonomy" id="9615"/>
</organismHost>
<gene>
    <name evidence="1" type="primary">L3</name>
</gene>
<organism>
    <name type="scientific">Canine adenovirus serotype 1 (strain CLL)</name>
    <name type="common">CAdV-1</name>
    <name type="synonym">Canine adenovirus 1 (strain CLL)</name>
    <dbReference type="NCBI Taxonomy" id="69150"/>
    <lineage>
        <taxon>Viruses</taxon>
        <taxon>Varidnaviria</taxon>
        <taxon>Bamfordvirae</taxon>
        <taxon>Preplasmiviricota</taxon>
        <taxon>Tectiliviricetes</taxon>
        <taxon>Rowavirales</taxon>
        <taxon>Adenoviridae</taxon>
        <taxon>Mastadenovirus</taxon>
        <taxon>Canine mastadenovirus A</taxon>
    </lineage>
</organism>
<proteinExistence type="inferred from homology"/>
<accession>Q65955</accession>
<evidence type="ECO:0000255" key="1">
    <source>
        <dbReference type="HAMAP-Rule" id="MF_04051"/>
    </source>
</evidence>
<evidence type="ECO:0000305" key="2"/>
<feature type="initiator methionine" description="Removed; by host" evidence="1">
    <location>
        <position position="1"/>
    </location>
</feature>
<feature type="chain" id="PRO_0000221828" description="Hexon protein" evidence="1">
    <location>
        <begin position="2"/>
        <end position="905"/>
    </location>
</feature>
<feature type="site" description="Involved in interaction with pre-protein VI" evidence="1">
    <location>
        <position position="729"/>
    </location>
</feature>
<feature type="modified residue" description="N-acetylalanine; by host" evidence="1">
    <location>
        <position position="2"/>
    </location>
</feature>
<feature type="modified residue" description="Phosphotyrosine; by host" evidence="1">
    <location>
        <position position="893"/>
    </location>
</feature>
<comment type="function">
    <text evidence="1">Major capsid protein that self-associates to form 240 hexon trimers, each in the shape of a hexagon, building most of the pseudo T=25 capsid. Assembled into trimeric units with the help of the chaperone shutoff protein. Transported by pre-protein VI to the nucleus where it associates with other structural proteins to form an empty capsid. Might be involved, through its interaction with host dyneins, in the intracellular microtubule-dependent transport of incoming viral capsid to the nucleus.</text>
</comment>
<comment type="subunit">
    <text evidence="1">Homotrimer. Interacts with the capsid vertex protein; this interaction binds the peripentonal hexons to the neighboring penton base. Interacts with the hexon-linking protein; this interaction tethers the hexons surrounding the penton to those situated in the central plate of the facet. Interacts with the hexon-interlacing protein; this interaction lashes the hexons together. Interacts with host dyneins DYNC1LI1 and DYNC1I2; this interaction might be involved in intracellular microtubule-dependent transport of incoming viral capsid. Interacts with the shutoff protein; this interaction allows folding and formation of hexons trimers. Interacts with pre-protein VI; this interaction probably allows nuclear import of hexon trimers and possibly pre-capsid assembly.</text>
</comment>
<comment type="subcellular location">
    <subcellularLocation>
        <location evidence="1">Virion</location>
    </subcellularLocation>
    <subcellularLocation>
        <location evidence="1">Host nucleus</location>
    </subcellularLocation>
    <text evidence="1">Forms the capsid icosahedric shell. Present in 720 copies per virion, assembled in 240 trimers.</text>
</comment>
<comment type="induction">
    <text evidence="1">Expressed in the late phase of the viral replicative cycle.</text>
</comment>
<comment type="miscellaneous">
    <text evidence="1">All late proteins expressed from the major late promoter are produced by alternative splicing and alternative polyadenylation of the same gene giving rise to non-overlapping ORFs. A leader sequence is present in the N-terminus of all these mRNAs and is recognized by the viral shutoff protein to provide expression although conventional translation via ribosome scanning from the cap has been shut off in the host cell.</text>
</comment>
<comment type="similarity">
    <text evidence="1 2">Belongs to the adenoviridae hexon protein family.</text>
</comment>
<protein>
    <recommendedName>
        <fullName evidence="1">Hexon protein</fullName>
        <shortName evidence="1">CP-H</shortName>
    </recommendedName>
    <alternativeName>
        <fullName evidence="1">Protein II</fullName>
    </alternativeName>
</protein>
<name>CAPSH_ADECC</name>
<sequence>MATPSMLPQWSYMHIAGQDAAEYLSPALVQFAQATSSYFKLDNKFRNPTVAPTHDVTTERSQRLQLRFVPVMQEDGQYTYKTRFQLAVGDNRVLDMASTYFDIRGTLDRGPSFKPYSGTAYNALAPRAGANNCLFNGSGANINTLAQVPFAGAITVNGQAAVTDNTYQPEPQLGPESWVDGTLADLGDASGRALKASTPRMPCYGSYAPPTNENGGQATGAVERRFYKVTANNNNEADALLYTEDVNLQTPDTHLVHQVSDDQVTGVQGLGQQAAPNRPNYIGFRDNFIGLMYYNSNGNLGVLAGQSSQLNAVVDLQDRNTELSYQLLLDALTDRSRYFSMWNQAVDSYDQDVRIIDNHGVEDDMPNYCFPLSGMGPLTNMTAMKVNNQNFQTDNTNVGPIQKIGFGNVEAMEINLNANLFKGFLYSNVALYLPDAYKYTPDNIVAPANANTYAYMNVRLPAANLIDTFVNIGARWSPDVMDSVNPFNHHRNAGLRYRSQLLGNGRYCSFHIQVPQKFFAIKNLLLLPGTYTYEWSFRKDVNMILQSSLGNDLRVDGASINIQSINLYASFFPMAHNTASTLEAMLRNDVNDQSFADYLSAANMLYPIPANTTNLPISIPARNWAGFRGWSFTRIKQRETPALGSPYDPYFTYSGSIPYLDSTFYLSHTFRRVSIMFDSSVSWPGNDRLLTPNEFEIKRYVDGEGYNVAQSNMTKDWFLVQMLAHYNIGYQGYHLPESYKDRMYSFLRNFEPMCRQLVDVTNYATYQSVTVGHQHNNSGYASPLSTFNPREGHPYPANWPYPLIGVNAVPTVTQKKFLCDRTLWRIPFSSNFMSMGTLTDLGQNLLYSNSAHALDMTFEVDAMNEPTLLYVLFEVFDVARVHQPHRGVIEVVYLRTPFSAGNATT</sequence>
<reference key="1">
    <citation type="submission" date="1996-08" db="EMBL/GenBank/DDBJ databases">
        <title>DNA sequence and genomic organization of canine adenovirus type 1.</title>
        <authorList>
            <person name="Campbell J.B."/>
            <person name="Zhao Y."/>
        </authorList>
    </citation>
    <scope>NUCLEOTIDE SEQUENCE [LARGE SCALE GENOMIC DNA]</scope>
</reference>
<dbReference type="EMBL" id="U55001">
    <property type="protein sequence ID" value="AAB05443.1"/>
    <property type="molecule type" value="Genomic_DNA"/>
</dbReference>
<dbReference type="SMR" id="Q65955"/>
<dbReference type="GO" id="GO:0043657">
    <property type="term" value="C:host cell"/>
    <property type="evidence" value="ECO:0007669"/>
    <property type="project" value="GOC"/>
</dbReference>
<dbReference type="GO" id="GO:0042025">
    <property type="term" value="C:host cell nucleus"/>
    <property type="evidence" value="ECO:0007669"/>
    <property type="project" value="UniProtKB-SubCell"/>
</dbReference>
<dbReference type="GO" id="GO:0039623">
    <property type="term" value="C:T=25 icosahedral viral capsid"/>
    <property type="evidence" value="ECO:0007669"/>
    <property type="project" value="UniProtKB-UniRule"/>
</dbReference>
<dbReference type="GO" id="GO:0005198">
    <property type="term" value="F:structural molecule activity"/>
    <property type="evidence" value="ECO:0007669"/>
    <property type="project" value="UniProtKB-UniRule"/>
</dbReference>
<dbReference type="GO" id="GO:0075521">
    <property type="term" value="P:microtubule-dependent intracellular transport of viral material towards nucleus"/>
    <property type="evidence" value="ECO:0007669"/>
    <property type="project" value="UniProtKB-UniRule"/>
</dbReference>
<dbReference type="GO" id="GO:0046718">
    <property type="term" value="P:symbiont entry into host cell"/>
    <property type="evidence" value="ECO:0007669"/>
    <property type="project" value="UniProtKB-UniRule"/>
</dbReference>
<dbReference type="Gene3D" id="2.70.9.10">
    <property type="entry name" value="Adenovirus Type 2 Hexon, domain 4"/>
    <property type="match status" value="2"/>
</dbReference>
<dbReference type="Gene3D" id="3.90.39.10">
    <property type="entry name" value="Hexon Major Viral Coat Protein, domain 2"/>
    <property type="match status" value="1"/>
</dbReference>
<dbReference type="Gene3D" id="3.90.249.10">
    <property type="entry name" value="Hexon Major Viral Coat Protein, domain 3"/>
    <property type="match status" value="2"/>
</dbReference>
<dbReference type="HAMAP" id="MF_04051">
    <property type="entry name" value="ADV_CAPSH"/>
    <property type="match status" value="1"/>
</dbReference>
<dbReference type="InterPro" id="IPR016108">
    <property type="entry name" value="Adenovirus_Pll_hexon_C"/>
</dbReference>
<dbReference type="InterPro" id="IPR016107">
    <property type="entry name" value="Adenovirus_Pll_hexon_N"/>
</dbReference>
<dbReference type="InterPro" id="IPR044942">
    <property type="entry name" value="Adenovirus_Pll_hexon_sub2"/>
</dbReference>
<dbReference type="InterPro" id="IPR016110">
    <property type="entry name" value="Adenovirus_Pll_hexon_sub3"/>
</dbReference>
<dbReference type="InterPro" id="IPR037542">
    <property type="entry name" value="ADV_hexon"/>
</dbReference>
<dbReference type="InterPro" id="IPR016112">
    <property type="entry name" value="VP_dsDNA_II"/>
</dbReference>
<dbReference type="Pfam" id="PF01065">
    <property type="entry name" value="Adeno_hexon"/>
    <property type="match status" value="1"/>
</dbReference>
<dbReference type="Pfam" id="PF03678">
    <property type="entry name" value="Adeno_hexon_C"/>
    <property type="match status" value="1"/>
</dbReference>
<dbReference type="SUPFAM" id="SSF49749">
    <property type="entry name" value="Group II dsDNA viruses VP"/>
    <property type="match status" value="2"/>
</dbReference>
<keyword id="KW-0007">Acetylation</keyword>
<keyword id="KW-0167">Capsid protein</keyword>
<keyword id="KW-1176">Cytoplasmic inwards viral transport</keyword>
<keyword id="KW-1048">Host nucleus</keyword>
<keyword id="KW-0945">Host-virus interaction</keyword>
<keyword id="KW-0426">Late protein</keyword>
<keyword id="KW-1177">Microtubular inwards viral transport</keyword>
<keyword id="KW-0597">Phosphoprotein</keyword>
<keyword id="KW-1148">T=25 icosahedral capsid protein</keyword>
<keyword id="KW-0946">Virion</keyword>
<keyword id="KW-1160">Virus entry into host cell</keyword>